<protein>
    <recommendedName>
        <fullName evidence="1">Anaerobic glycerol-3-phosphate dehydrogenase subunit B</fullName>
        <shortName evidence="1">Anaerobic G-3-P dehydrogenase subunit B</shortName>
        <shortName evidence="1">Anaerobic G3Pdhase B</shortName>
        <ecNumber evidence="1">1.1.5.3</ecNumber>
    </recommendedName>
</protein>
<dbReference type="EC" id="1.1.5.3" evidence="1"/>
<dbReference type="EMBL" id="CP001127">
    <property type="protein sequence ID" value="ACF91260.1"/>
    <property type="molecule type" value="Genomic_DNA"/>
</dbReference>
<dbReference type="RefSeq" id="WP_000667152.1">
    <property type="nucleotide sequence ID" value="NC_011094.1"/>
</dbReference>
<dbReference type="KEGG" id="sew:SeSA_A2513"/>
<dbReference type="HOGENOM" id="CLU_047793_0_0_6"/>
<dbReference type="UniPathway" id="UPA00618">
    <property type="reaction ID" value="UER00673"/>
</dbReference>
<dbReference type="Proteomes" id="UP000001865">
    <property type="component" value="Chromosome"/>
</dbReference>
<dbReference type="GO" id="GO:0009331">
    <property type="term" value="C:glycerol-3-phosphate dehydrogenase (FAD) complex"/>
    <property type="evidence" value="ECO:0007669"/>
    <property type="project" value="InterPro"/>
</dbReference>
<dbReference type="GO" id="GO:0004368">
    <property type="term" value="F:glycerol-3-phosphate dehydrogenase (quinone) activity"/>
    <property type="evidence" value="ECO:0007669"/>
    <property type="project" value="UniProtKB-UniRule"/>
</dbReference>
<dbReference type="GO" id="GO:0019563">
    <property type="term" value="P:glycerol catabolic process"/>
    <property type="evidence" value="ECO:0007669"/>
    <property type="project" value="UniProtKB-UniRule"/>
</dbReference>
<dbReference type="Gene3D" id="3.50.50.60">
    <property type="entry name" value="FAD/NAD(P)-binding domain"/>
    <property type="match status" value="1"/>
</dbReference>
<dbReference type="HAMAP" id="MF_00753">
    <property type="entry name" value="Glycerol3P_GlpB"/>
    <property type="match status" value="1"/>
</dbReference>
<dbReference type="InterPro" id="IPR003953">
    <property type="entry name" value="FAD-dep_OxRdtase_2_FAD-bd"/>
</dbReference>
<dbReference type="InterPro" id="IPR036188">
    <property type="entry name" value="FAD/NAD-bd_sf"/>
</dbReference>
<dbReference type="InterPro" id="IPR009158">
    <property type="entry name" value="G3P_DH_GlpB_su"/>
</dbReference>
<dbReference type="NCBIfam" id="TIGR03378">
    <property type="entry name" value="glycerol3P_GlpB"/>
    <property type="match status" value="1"/>
</dbReference>
<dbReference type="NCBIfam" id="NF003718">
    <property type="entry name" value="PRK05329.1-1"/>
    <property type="match status" value="1"/>
</dbReference>
<dbReference type="NCBIfam" id="NF003719">
    <property type="entry name" value="PRK05329.1-2"/>
    <property type="match status" value="1"/>
</dbReference>
<dbReference type="NCBIfam" id="NF003720">
    <property type="entry name" value="PRK05329.1-3"/>
    <property type="match status" value="1"/>
</dbReference>
<dbReference type="NCBIfam" id="NF003721">
    <property type="entry name" value="PRK05329.1-4"/>
    <property type="match status" value="1"/>
</dbReference>
<dbReference type="Pfam" id="PF00890">
    <property type="entry name" value="FAD_binding_2"/>
    <property type="match status" value="1"/>
</dbReference>
<dbReference type="PIRSF" id="PIRSF000141">
    <property type="entry name" value="Anaerobic_G3P_dh"/>
    <property type="match status" value="1"/>
</dbReference>
<dbReference type="SUPFAM" id="SSF51905">
    <property type="entry name" value="FAD/NAD(P)-binding domain"/>
    <property type="match status" value="1"/>
</dbReference>
<gene>
    <name evidence="1" type="primary">glpB</name>
    <name type="ordered locus">SeSA_A2513</name>
</gene>
<accession>B4TPG8</accession>
<proteinExistence type="inferred from homology"/>
<sequence length="419" mass="45724">MKFDTVIMGGGLAGLLCGLQLQQHGLRCAIVTRGQSALHFSSGSLDLLSALPDGQPVTDITAGLDALRRQAPEHPYSRLGAQKVLTLAQQAQTLLNASGAQLYGDVQQAHQRVTPLGTLRSTWLSSPEVPVWPLSAQRICVVGVSGLLDFQAHLAAASLRQRDLNVETAEIDLPELDVLRDNPTEFRAVNIARLLDNEEKWPLLYDALSPIATNCDMIIMPACFGLANDTLWRWLNERLPCALTLLPTLPPSVLGIRLHNQLQRQFVRQGGIWMPGDEVKKVTCRRGTVSEIWTRNHADIPLRPRFAVLASGSFFSSGLVAEREGIREPILGLDVQQTATRAEWYQQHFFDPQPWQQFGVVTDDAFRPSLAGNTVENLYAIGSVLAGFDPIAEGCGGGVCAVSALQAAHHIAERAGEQQ</sequence>
<comment type="function">
    <text evidence="1">Conversion of glycerol 3-phosphate to dihydroxyacetone. Uses fumarate or nitrate as electron acceptor.</text>
</comment>
<comment type="catalytic activity">
    <reaction evidence="1">
        <text>a quinone + sn-glycerol 3-phosphate = dihydroxyacetone phosphate + a quinol</text>
        <dbReference type="Rhea" id="RHEA:18977"/>
        <dbReference type="ChEBI" id="CHEBI:24646"/>
        <dbReference type="ChEBI" id="CHEBI:57597"/>
        <dbReference type="ChEBI" id="CHEBI:57642"/>
        <dbReference type="ChEBI" id="CHEBI:132124"/>
        <dbReference type="EC" id="1.1.5.3"/>
    </reaction>
</comment>
<comment type="cofactor">
    <cofactor evidence="1">
        <name>FMN</name>
        <dbReference type="ChEBI" id="CHEBI:58210"/>
    </cofactor>
</comment>
<comment type="pathway">
    <text evidence="1">Polyol metabolism; glycerol degradation via glycerol kinase pathway; glycerone phosphate from sn-glycerol 3-phosphate (anaerobic route): step 1/1.</text>
</comment>
<comment type="subunit">
    <text evidence="1">Composed of a catalytic GlpA/B dimer and of membrane bound GlpC.</text>
</comment>
<comment type="similarity">
    <text evidence="1">Belongs to the anaerobic G-3-P dehydrogenase subunit B family.</text>
</comment>
<keyword id="KW-0285">Flavoprotein</keyword>
<keyword id="KW-0288">FMN</keyword>
<keyword id="KW-0560">Oxidoreductase</keyword>
<name>GLPB_SALSV</name>
<feature type="chain" id="PRO_1000133374" description="Anaerobic glycerol-3-phosphate dehydrogenase subunit B">
    <location>
        <begin position="1"/>
        <end position="419"/>
    </location>
</feature>
<reference key="1">
    <citation type="journal article" date="2011" name="J. Bacteriol.">
        <title>Comparative genomics of 28 Salmonella enterica isolates: evidence for CRISPR-mediated adaptive sublineage evolution.</title>
        <authorList>
            <person name="Fricke W.F."/>
            <person name="Mammel M.K."/>
            <person name="McDermott P.F."/>
            <person name="Tartera C."/>
            <person name="White D.G."/>
            <person name="Leclerc J.E."/>
            <person name="Ravel J."/>
            <person name="Cebula T.A."/>
        </authorList>
    </citation>
    <scope>NUCLEOTIDE SEQUENCE [LARGE SCALE GENOMIC DNA]</scope>
    <source>
        <strain>CVM19633</strain>
    </source>
</reference>
<organism>
    <name type="scientific">Salmonella schwarzengrund (strain CVM19633)</name>
    <dbReference type="NCBI Taxonomy" id="439843"/>
    <lineage>
        <taxon>Bacteria</taxon>
        <taxon>Pseudomonadati</taxon>
        <taxon>Pseudomonadota</taxon>
        <taxon>Gammaproteobacteria</taxon>
        <taxon>Enterobacterales</taxon>
        <taxon>Enterobacteriaceae</taxon>
        <taxon>Salmonella</taxon>
    </lineage>
</organism>
<evidence type="ECO:0000255" key="1">
    <source>
        <dbReference type="HAMAP-Rule" id="MF_00753"/>
    </source>
</evidence>